<keyword id="KW-1185">Reference proteome</keyword>
<accession>Q9ZWB8</accession>
<protein>
    <recommendedName>
        <fullName>CRIB domain-containing protein RIC8</fullName>
    </recommendedName>
    <alternativeName>
        <fullName>ROP-interactive CRIB motif-containing protein 8</fullName>
    </alternativeName>
    <alternativeName>
        <fullName>Target of ROP protein RIC8</fullName>
    </alternativeName>
</protein>
<gene>
    <name type="primary">RIC8</name>
    <name type="ordered locus">At1g03982</name>
    <name type="ORF">F21M11.8</name>
</gene>
<comment type="function">
    <text evidence="1">Functions as a downstream effector of Rho-related GTP binding proteins of the 'Rho of Plants' (ROPs) family. Participates in the propagation of ROP GTPase signals in specific cellular responses (By similarity).</text>
</comment>
<reference key="1">
    <citation type="journal article" date="2000" name="Nature">
        <title>Sequence and analysis of chromosome 1 of the plant Arabidopsis thaliana.</title>
        <authorList>
            <person name="Theologis A."/>
            <person name="Ecker J.R."/>
            <person name="Palm C.J."/>
            <person name="Federspiel N.A."/>
            <person name="Kaul S."/>
            <person name="White O."/>
            <person name="Alonso J."/>
            <person name="Altafi H."/>
            <person name="Araujo R."/>
            <person name="Bowman C.L."/>
            <person name="Brooks S.Y."/>
            <person name="Buehler E."/>
            <person name="Chan A."/>
            <person name="Chao Q."/>
            <person name="Chen H."/>
            <person name="Cheuk R.F."/>
            <person name="Chin C.W."/>
            <person name="Chung M.K."/>
            <person name="Conn L."/>
            <person name="Conway A.B."/>
            <person name="Conway A.R."/>
            <person name="Creasy T.H."/>
            <person name="Dewar K."/>
            <person name="Dunn P."/>
            <person name="Etgu P."/>
            <person name="Feldblyum T.V."/>
            <person name="Feng J.-D."/>
            <person name="Fong B."/>
            <person name="Fujii C.Y."/>
            <person name="Gill J.E."/>
            <person name="Goldsmith A.D."/>
            <person name="Haas B."/>
            <person name="Hansen N.F."/>
            <person name="Hughes B."/>
            <person name="Huizar L."/>
            <person name="Hunter J.L."/>
            <person name="Jenkins J."/>
            <person name="Johnson-Hopson C."/>
            <person name="Khan S."/>
            <person name="Khaykin E."/>
            <person name="Kim C.J."/>
            <person name="Koo H.L."/>
            <person name="Kremenetskaia I."/>
            <person name="Kurtz D.B."/>
            <person name="Kwan A."/>
            <person name="Lam B."/>
            <person name="Langin-Hooper S."/>
            <person name="Lee A."/>
            <person name="Lee J.M."/>
            <person name="Lenz C.A."/>
            <person name="Li J.H."/>
            <person name="Li Y.-P."/>
            <person name="Lin X."/>
            <person name="Liu S.X."/>
            <person name="Liu Z.A."/>
            <person name="Luros J.S."/>
            <person name="Maiti R."/>
            <person name="Marziali A."/>
            <person name="Militscher J."/>
            <person name="Miranda M."/>
            <person name="Nguyen M."/>
            <person name="Nierman W.C."/>
            <person name="Osborne B.I."/>
            <person name="Pai G."/>
            <person name="Peterson J."/>
            <person name="Pham P.K."/>
            <person name="Rizzo M."/>
            <person name="Rooney T."/>
            <person name="Rowley D."/>
            <person name="Sakano H."/>
            <person name="Salzberg S.L."/>
            <person name="Schwartz J.R."/>
            <person name="Shinn P."/>
            <person name="Southwick A.M."/>
            <person name="Sun H."/>
            <person name="Tallon L.J."/>
            <person name="Tambunga G."/>
            <person name="Toriumi M.J."/>
            <person name="Town C.D."/>
            <person name="Utterback T."/>
            <person name="Van Aken S."/>
            <person name="Vaysberg M."/>
            <person name="Vysotskaia V.S."/>
            <person name="Walker M."/>
            <person name="Wu D."/>
            <person name="Yu G."/>
            <person name="Fraser C.M."/>
            <person name="Venter J.C."/>
            <person name="Davis R.W."/>
        </authorList>
    </citation>
    <scope>NUCLEOTIDE SEQUENCE [LARGE SCALE GENOMIC DNA]</scope>
    <source>
        <strain>cv. Columbia</strain>
    </source>
</reference>
<reference key="2">
    <citation type="journal article" date="2017" name="Plant J.">
        <title>Araport11: a complete reannotation of the Arabidopsis thaliana reference genome.</title>
        <authorList>
            <person name="Cheng C.Y."/>
            <person name="Krishnakumar V."/>
            <person name="Chan A.P."/>
            <person name="Thibaud-Nissen F."/>
            <person name="Schobel S."/>
            <person name="Town C.D."/>
        </authorList>
    </citation>
    <scope>GENOME REANNOTATION</scope>
    <source>
        <strain>cv. Columbia</strain>
    </source>
</reference>
<reference key="3">
    <citation type="journal article" date="2006" name="Plant Biotechnol. J.">
        <title>Simultaneous high-throughput recombinational cloning of open reading frames in closed and open configurations.</title>
        <authorList>
            <person name="Underwood B.A."/>
            <person name="Vanderhaeghen R."/>
            <person name="Whitford R."/>
            <person name="Town C.D."/>
            <person name="Hilson P."/>
        </authorList>
    </citation>
    <scope>NUCLEOTIDE SEQUENCE [LARGE SCALE MRNA]</scope>
    <source>
        <strain>cv. Columbia</strain>
    </source>
</reference>
<reference key="4">
    <citation type="journal article" date="2001" name="Plant Cell">
        <title>A genome-wide analysis of Arabidopsis Rop-interactive CRIB motif-containing proteins that act as Rop GTPase targets.</title>
        <authorList>
            <person name="Wu G."/>
            <person name="Gu Y."/>
            <person name="Li S."/>
            <person name="Yang Z."/>
        </authorList>
    </citation>
    <scope>GENE FAMILY</scope>
    <scope>NOMENCLATURE</scope>
</reference>
<name>RIC8_ARATH</name>
<proteinExistence type="evidence at transcript level"/>
<feature type="chain" id="PRO_0000422731" description="CRIB domain-containing protein RIC8">
    <location>
        <begin position="1"/>
        <end position="177"/>
    </location>
</feature>
<feature type="domain" description="CRIB" evidence="2">
    <location>
        <begin position="17"/>
        <end position="30"/>
    </location>
</feature>
<feature type="region of interest" description="Disordered" evidence="3">
    <location>
        <begin position="72"/>
        <end position="177"/>
    </location>
</feature>
<feature type="compositionally biased region" description="Basic and acidic residues" evidence="3">
    <location>
        <begin position="72"/>
        <end position="89"/>
    </location>
</feature>
<feature type="compositionally biased region" description="Low complexity" evidence="3">
    <location>
        <begin position="158"/>
        <end position="171"/>
    </location>
</feature>
<dbReference type="EMBL" id="AC003027">
    <property type="protein sequence ID" value="AAD10672.1"/>
    <property type="molecule type" value="Genomic_DNA"/>
</dbReference>
<dbReference type="EMBL" id="CP002684">
    <property type="protein sequence ID" value="AEE27642.1"/>
    <property type="molecule type" value="Genomic_DNA"/>
</dbReference>
<dbReference type="EMBL" id="DQ487432">
    <property type="protein sequence ID" value="ABF59176.1"/>
    <property type="molecule type" value="mRNA"/>
</dbReference>
<dbReference type="PIR" id="H86170">
    <property type="entry name" value="H86170"/>
</dbReference>
<dbReference type="RefSeq" id="NP_001030953.1">
    <property type="nucleotide sequence ID" value="NM_001035876.2"/>
</dbReference>
<dbReference type="FunCoup" id="Q9ZWB8">
    <property type="interactions" value="14"/>
</dbReference>
<dbReference type="STRING" id="3702.Q9ZWB8"/>
<dbReference type="PaxDb" id="3702-AT1G03982.1"/>
<dbReference type="EnsemblPlants" id="AT1G03982.1">
    <property type="protein sequence ID" value="AT1G03982.1"/>
    <property type="gene ID" value="AT1G03982"/>
</dbReference>
<dbReference type="GeneID" id="3766656"/>
<dbReference type="Gramene" id="AT1G03982.1">
    <property type="protein sequence ID" value="AT1G03982.1"/>
    <property type="gene ID" value="AT1G03982"/>
</dbReference>
<dbReference type="KEGG" id="ath:AT1G03982"/>
<dbReference type="Araport" id="AT1G03982"/>
<dbReference type="TAIR" id="AT1G03982"/>
<dbReference type="eggNOG" id="ENOG502S2ZY">
    <property type="taxonomic scope" value="Eukaryota"/>
</dbReference>
<dbReference type="HOGENOM" id="CLU_086489_2_0_1"/>
<dbReference type="InParanoid" id="Q9ZWB8"/>
<dbReference type="OMA" id="PMDNGTD"/>
<dbReference type="PhylomeDB" id="Q9ZWB8"/>
<dbReference type="PRO" id="PR:Q9ZWB8"/>
<dbReference type="Proteomes" id="UP000006548">
    <property type="component" value="Chromosome 1"/>
</dbReference>
<dbReference type="ExpressionAtlas" id="Q9ZWB8">
    <property type="expression patterns" value="differential"/>
</dbReference>
<dbReference type="CDD" id="cd00132">
    <property type="entry name" value="CRIB"/>
    <property type="match status" value="1"/>
</dbReference>
<dbReference type="FunFam" id="3.90.810.10:FF:000029">
    <property type="entry name" value="Elongation factor Ts, mitochondrial"/>
    <property type="match status" value="1"/>
</dbReference>
<dbReference type="Gene3D" id="3.90.810.10">
    <property type="entry name" value="CRIB domain"/>
    <property type="match status" value="1"/>
</dbReference>
<dbReference type="InterPro" id="IPR000095">
    <property type="entry name" value="CRIB_dom"/>
</dbReference>
<dbReference type="InterPro" id="IPR036936">
    <property type="entry name" value="CRIB_dom_sf"/>
</dbReference>
<dbReference type="PANTHER" id="PTHR46325">
    <property type="entry name" value="CRIB DOMAIN-CONTAINING PROTEIN RIC8"/>
    <property type="match status" value="1"/>
</dbReference>
<dbReference type="PANTHER" id="PTHR46325:SF39">
    <property type="entry name" value="CRIB DOMAIN-CONTAINING PROTEIN RIC8"/>
    <property type="match status" value="1"/>
</dbReference>
<dbReference type="Pfam" id="PF00786">
    <property type="entry name" value="PBD"/>
    <property type="match status" value="1"/>
</dbReference>
<dbReference type="SMART" id="SM00285">
    <property type="entry name" value="PBD"/>
    <property type="match status" value="1"/>
</dbReference>
<dbReference type="PROSITE" id="PS50108">
    <property type="entry name" value="CRIB"/>
    <property type="match status" value="1"/>
</dbReference>
<sequence length="177" mass="19411">MINLHNAENEKEAEMQIGTPTDVKHVAHIGWDGGSVNHNPPSWMKDFKVLGGYSPALIGNIKEDASCIFEDSTRSRDIPRLPKSSRERSSTLGGSPTKERSRRRGSSQYNGNPKVSRRSSKESSAIPQDGGFNKKSRRKKSKDCVDGGSRRSSRRVRGSQVESISDSSSTSDAGYLT</sequence>
<evidence type="ECO:0000250" key="1"/>
<evidence type="ECO:0000255" key="2">
    <source>
        <dbReference type="PROSITE-ProRule" id="PRU00057"/>
    </source>
</evidence>
<evidence type="ECO:0000256" key="3">
    <source>
        <dbReference type="SAM" id="MobiDB-lite"/>
    </source>
</evidence>
<organism>
    <name type="scientific">Arabidopsis thaliana</name>
    <name type="common">Mouse-ear cress</name>
    <dbReference type="NCBI Taxonomy" id="3702"/>
    <lineage>
        <taxon>Eukaryota</taxon>
        <taxon>Viridiplantae</taxon>
        <taxon>Streptophyta</taxon>
        <taxon>Embryophyta</taxon>
        <taxon>Tracheophyta</taxon>
        <taxon>Spermatophyta</taxon>
        <taxon>Magnoliopsida</taxon>
        <taxon>eudicotyledons</taxon>
        <taxon>Gunneridae</taxon>
        <taxon>Pentapetalae</taxon>
        <taxon>rosids</taxon>
        <taxon>malvids</taxon>
        <taxon>Brassicales</taxon>
        <taxon>Brassicaceae</taxon>
        <taxon>Camelineae</taxon>
        <taxon>Arabidopsis</taxon>
    </lineage>
</organism>